<sequence>MEISSSPWNDGGYSPYERNRVAVSPFSSALEGEERIETSRSLGDHCFEPLPYVTNYLSIFALFGKEIFGDKGNVSSRNEYLLKKYYSLKKPFVLRHNGHALKNPDMPLQRNDILQTNFMVDKFLNRTVRSVNFNNFKIISDMQSKSGRGTKSGTNQNQSADAIQNICLPSIPSALPYFQYYRKLLTVNTKEWDILKLHSLWVPKLRKDFKDFSLYGDKNSLKPIDSHYDEDNTMKKNLFFERSPSRQTLDGKGCASKGYDISSGNMIIPSLFSEDKLPALTYHCSVELNGNIYIFGGLMPCYSYEEDAPMLNDFFVDGIKNLPPPLLPQVINNPSMVNNPHLYVASIPSCRFSKPKMGGYIPPPLLCVQGSKLTDRHIFFYGGFEIRTETRGDENGKYHLKKRLYVNNTGYILDIMSFKFTKIDIIVQPSKYNAYPTMSSRFGHLQISIDNPNRRASVHSSSMNEIHKMGSASMKQGSSITSGRLEKAAVLSSLPHNTVHTVIIFGGYRQTGDDRYEAMNDLWKIEIPVIRRGKKGYCKFSETANAILLTPSEKDKSDWPEERAFSAFSVHGTSLMDRSSLDMRLLNNLKNHFVLKPSYISQDRVVSPKPVFPMMVHGTHQDLFNSGSAAQESPKAGASASSASAASFDPDMDDNLENYIVNPGRKSSSIPMTAIGRQRLILSQEKPVGKTVVLHGGSNGLNVLDDMWLMDLECETWTPIETFAKADSSEDGDEKLDSVNVGLVGHRMESIGRICVCIGGMVQEDVDQFYSENDDEPPRKRKVDTLPLGGNFLNTIDLSTQCWEEHKITLSKKEDDEDRQDSENEDTNSNIVVGVGGTSLQCDKSIILIGGLISRRSNVKEIYLHGTITKSIFPSVNPSA</sequence>
<protein>
    <recommendedName>
        <fullName>Guanine nucleotide-binding protein subunit beta 2</fullName>
    </recommendedName>
    <alternativeName>
        <fullName>Gbeta mimic kelch protein 2</fullName>
    </alternativeName>
</protein>
<reference key="1">
    <citation type="journal article" date="2002" name="Mol. Cell">
        <title>The Galpha protein Gpa2 controls yeast differentiation by interacting with kelch repeat proteins that mimic Gbeta subunits.</title>
        <authorList>
            <person name="Harashima T."/>
            <person name="Heitman J."/>
        </authorList>
    </citation>
    <scope>NUCLEOTIDE SEQUENCE [GENOMIC DNA]</scope>
    <scope>FUNCTION</scope>
    <scope>INTERACTION WITH GPA2</scope>
    <source>
        <strain>Sigma 1278B</strain>
    </source>
</reference>
<reference key="2">
    <citation type="journal article" date="1995" name="Proc. Natl. Acad. Sci. U.S.A.">
        <title>The nucleotide sequence of chromosome I from Saccharomyces cerevisiae.</title>
        <authorList>
            <person name="Bussey H."/>
            <person name="Kaback D.B."/>
            <person name="Zhong W.-W."/>
            <person name="Vo D.H."/>
            <person name="Clark M.W."/>
            <person name="Fortin N."/>
            <person name="Hall J."/>
            <person name="Ouellette B.F.F."/>
            <person name="Keng T."/>
            <person name="Barton A.B."/>
            <person name="Su Y."/>
            <person name="Davies C.J."/>
            <person name="Storms R.K."/>
        </authorList>
    </citation>
    <scope>NUCLEOTIDE SEQUENCE [LARGE SCALE GENOMIC DNA]</scope>
    <source>
        <strain>ATCC 204508 / S288c</strain>
    </source>
</reference>
<reference key="3">
    <citation type="submission" date="2004-01" db="EMBL/GenBank/DDBJ databases">
        <authorList>
            <person name="Fisk D."/>
            <person name="Cherry J.M."/>
        </authorList>
    </citation>
    <scope>SEQUENCE REVISION TO C-TERMINUS</scope>
</reference>
<reference key="4">
    <citation type="journal article" date="2014" name="G3 (Bethesda)">
        <title>The reference genome sequence of Saccharomyces cerevisiae: Then and now.</title>
        <authorList>
            <person name="Engel S.R."/>
            <person name="Dietrich F.S."/>
            <person name="Fisk D.G."/>
            <person name="Binkley G."/>
            <person name="Balakrishnan R."/>
            <person name="Costanzo M.C."/>
            <person name="Dwight S.S."/>
            <person name="Hitz B.C."/>
            <person name="Karra K."/>
            <person name="Nash R.S."/>
            <person name="Weng S."/>
            <person name="Wong E.D."/>
            <person name="Lloyd P."/>
            <person name="Skrzypek M.S."/>
            <person name="Miyasato S.R."/>
            <person name="Simison M."/>
            <person name="Cherry J.M."/>
        </authorList>
    </citation>
    <scope>GENOME REANNOTATION</scope>
    <scope>SEQUENCE REVISION TO 661; 802 AND 814-815</scope>
    <source>
        <strain>ATCC 204508 / S288c</strain>
    </source>
</reference>
<reference key="5">
    <citation type="journal article" date="2003" name="J. Cell Sci.">
        <title>Krh1p and Krh2p act downstream of the Gpa2p G(alpha) subunit to negatively regulate haploid invasive growth.</title>
        <authorList>
            <person name="Batlle M."/>
            <person name="Lu A."/>
            <person name="Green D.A."/>
            <person name="Xue Y."/>
            <person name="Hirsch J.P."/>
        </authorList>
    </citation>
    <scope>FUNCTION</scope>
</reference>
<reference key="6">
    <citation type="journal article" date="2003" name="Nature">
        <title>Global analysis of protein localization in budding yeast.</title>
        <authorList>
            <person name="Huh W.-K."/>
            <person name="Falvo J.V."/>
            <person name="Gerke L.C."/>
            <person name="Carroll A.S."/>
            <person name="Howson R.W."/>
            <person name="Weissman J.S."/>
            <person name="O'Shea E.K."/>
        </authorList>
    </citation>
    <scope>SUBCELLULAR LOCATION [LARGE SCALE ANALYSIS]</scope>
</reference>
<reference key="7">
    <citation type="journal article" date="2005" name="Eukaryot. Cell">
        <title>Cyclic AMP-independent regulation of protein kinase A substrate phosphorylation by Kelch repeat proteins.</title>
        <authorList>
            <person name="Lu A."/>
            <person name="Hirsch J.P."/>
        </authorList>
    </citation>
    <scope>FUNCTION</scope>
</reference>
<reference key="8">
    <citation type="journal article" date="2008" name="Mol. Cell. Proteomics">
        <title>A multidimensional chromatography technology for in-depth phosphoproteome analysis.</title>
        <authorList>
            <person name="Albuquerque C.P."/>
            <person name="Smolka M.B."/>
            <person name="Payne S.H."/>
            <person name="Bafna V."/>
            <person name="Eng J."/>
            <person name="Zhou H."/>
        </authorList>
    </citation>
    <scope>PHOSPHORYLATION [LARGE SCALE ANALYSIS] AT SER-24</scope>
    <scope>IDENTIFICATION BY MASS SPECTROMETRY [LARGE SCALE ANALYSIS]</scope>
</reference>
<reference key="9">
    <citation type="journal article" date="2009" name="Science">
        <title>Global analysis of Cdk1 substrate phosphorylation sites provides insights into evolution.</title>
        <authorList>
            <person name="Holt L.J."/>
            <person name="Tuch B.B."/>
            <person name="Villen J."/>
            <person name="Johnson A.D."/>
            <person name="Gygi S.P."/>
            <person name="Morgan D.O."/>
        </authorList>
    </citation>
    <scope>IDENTIFICATION BY MASS SPECTROMETRY [LARGE SCALE ANALYSIS]</scope>
</reference>
<keyword id="KW-0963">Cytoplasm</keyword>
<keyword id="KW-0880">Kelch repeat</keyword>
<keyword id="KW-0496">Mitochondrion</keyword>
<keyword id="KW-0597">Phosphoprotein</keyword>
<keyword id="KW-1185">Reference proteome</keyword>
<keyword id="KW-0677">Repeat</keyword>
<keyword id="KW-0807">Transducer</keyword>
<proteinExistence type="evidence at protein level"/>
<feature type="chain" id="PRO_0000119071" description="Guanine nucleotide-binding protein subunit beta 2">
    <location>
        <begin position="1"/>
        <end position="880"/>
    </location>
</feature>
<feature type="repeat" description="Kelch 1">
    <location>
        <begin position="291"/>
        <end position="339"/>
    </location>
</feature>
<feature type="repeat" description="Kelch 2">
    <location>
        <begin position="377"/>
        <end position="425"/>
    </location>
</feature>
<feature type="repeat" description="Kelch 3">
    <location>
        <begin position="501"/>
        <end position="552"/>
    </location>
</feature>
<feature type="repeat" description="Kelch 4">
    <location>
        <begin position="691"/>
        <end position="738"/>
    </location>
</feature>
<feature type="region of interest" description="Disordered" evidence="1">
    <location>
        <begin position="624"/>
        <end position="649"/>
    </location>
</feature>
<feature type="compositionally biased region" description="Low complexity" evidence="1">
    <location>
        <begin position="638"/>
        <end position="647"/>
    </location>
</feature>
<feature type="modified residue" description="Phosphoserine" evidence="7">
    <location>
        <position position="24"/>
    </location>
</feature>
<feature type="sequence variant" description="In strain: Sigma 1278B.">
    <original>Y</original>
    <variation>H</variation>
    <location>
        <position position="215"/>
    </location>
</feature>
<feature type="sequence variant" description="In strain: Sigma 1278B.">
    <original>L</original>
    <variation>P</variation>
    <location>
        <position position="221"/>
    </location>
</feature>
<feature type="sequence variant" description="In strain: Sigma 1278B.">
    <original>S</original>
    <variation>R</variation>
    <location>
        <position position="552"/>
    </location>
</feature>
<feature type="sequence variant" description="In strain: Sigma 1278B.">
    <original>A</original>
    <variation>T</variation>
    <location>
        <position position="674"/>
    </location>
</feature>
<feature type="sequence variant" description="In strain: Sigma 1278B.">
    <original>P</original>
    <variation>S</variation>
    <location>
        <position position="777"/>
    </location>
</feature>
<feature type="sequence conflict" description="In Ref. 2; AAC04977." evidence="6" ref="2">
    <original>V</original>
    <variation>I</variation>
    <location>
        <position position="661"/>
    </location>
</feature>
<feature type="sequence conflict" description="In Ref. 2; AAC04977." evidence="6" ref="2">
    <original>C</original>
    <variation>F</variation>
    <location>
        <position position="802"/>
    </location>
</feature>
<feature type="sequence conflict" description="In Ref. 2; AAC04977." evidence="6" ref="2">
    <original>ED</original>
    <variation>AA</variation>
    <location>
        <begin position="814"/>
        <end position="815"/>
    </location>
</feature>
<evidence type="ECO:0000256" key="1">
    <source>
        <dbReference type="SAM" id="MobiDB-lite"/>
    </source>
</evidence>
<evidence type="ECO:0000269" key="2">
    <source>
    </source>
</evidence>
<evidence type="ECO:0000269" key="3">
    <source>
    </source>
</evidence>
<evidence type="ECO:0000269" key="4">
    <source>
    </source>
</evidence>
<evidence type="ECO:0000269" key="5">
    <source>
    </source>
</evidence>
<evidence type="ECO:0000305" key="6"/>
<evidence type="ECO:0007744" key="7">
    <source>
    </source>
</evidence>
<organism>
    <name type="scientific">Saccharomyces cerevisiae (strain ATCC 204508 / S288c)</name>
    <name type="common">Baker's yeast</name>
    <dbReference type="NCBI Taxonomy" id="559292"/>
    <lineage>
        <taxon>Eukaryota</taxon>
        <taxon>Fungi</taxon>
        <taxon>Dikarya</taxon>
        <taxon>Ascomycota</taxon>
        <taxon>Saccharomycotina</taxon>
        <taxon>Saccharomycetes</taxon>
        <taxon>Saccharomycetales</taxon>
        <taxon>Saccharomycetaceae</taxon>
        <taxon>Saccharomyces</taxon>
    </lineage>
</organism>
<gene>
    <name type="primary">GPB2</name>
    <name type="synonym">KRH1</name>
    <name type="ordered locus">YAL056W</name>
</gene>
<name>GPB2_YEAST</name>
<dbReference type="EMBL" id="AB127946">
    <property type="protein sequence ID" value="BAD04042.1"/>
    <property type="molecule type" value="Genomic_DNA"/>
</dbReference>
<dbReference type="EMBL" id="AB127947">
    <property type="protein sequence ID" value="BAD04043.1"/>
    <property type="molecule type" value="Genomic_DNA"/>
</dbReference>
<dbReference type="EMBL" id="U12980">
    <property type="protein sequence ID" value="AAC04977.2"/>
    <property type="molecule type" value="Genomic_DNA"/>
</dbReference>
<dbReference type="EMBL" id="BK006935">
    <property type="protein sequence ID" value="DAA06932.2"/>
    <property type="molecule type" value="Genomic_DNA"/>
</dbReference>
<dbReference type="PIR" id="S51965">
    <property type="entry name" value="S51965"/>
</dbReference>
<dbReference type="RefSeq" id="NP_009345.3">
    <property type="nucleotide sequence ID" value="NM_001178199.2"/>
</dbReference>
<dbReference type="BioGRID" id="31773">
    <property type="interactions" value="120"/>
</dbReference>
<dbReference type="DIP" id="DIP-7315N"/>
<dbReference type="FunCoup" id="P39717">
    <property type="interactions" value="28"/>
</dbReference>
<dbReference type="IntAct" id="P39717">
    <property type="interactions" value="14"/>
</dbReference>
<dbReference type="STRING" id="4932.YAL056W"/>
<dbReference type="iPTMnet" id="P39717"/>
<dbReference type="PaxDb" id="4932-YAL056W"/>
<dbReference type="PeptideAtlas" id="P39717"/>
<dbReference type="EnsemblFungi" id="YAL056W_mRNA">
    <property type="protein sequence ID" value="YAL056W"/>
    <property type="gene ID" value="YAL056W"/>
</dbReference>
<dbReference type="GeneID" id="851243"/>
<dbReference type="KEGG" id="sce:YAL056W"/>
<dbReference type="AGR" id="SGD:S000000052"/>
<dbReference type="SGD" id="S000000052">
    <property type="gene designation" value="GPB2"/>
</dbReference>
<dbReference type="VEuPathDB" id="FungiDB:YAL056W"/>
<dbReference type="eggNOG" id="ENOG502QV98">
    <property type="taxonomic scope" value="Eukaryota"/>
</dbReference>
<dbReference type="GeneTree" id="ENSGT00940000176635"/>
<dbReference type="HOGENOM" id="CLU_015198_0_0_1"/>
<dbReference type="InParanoid" id="P39717"/>
<dbReference type="OMA" id="GHRMESI"/>
<dbReference type="OrthoDB" id="10251809at2759"/>
<dbReference type="BioCyc" id="YEAST:G3O-28860-MONOMER"/>
<dbReference type="BioGRID-ORCS" id="851243">
    <property type="hits" value="2 hits in 10 CRISPR screens"/>
</dbReference>
<dbReference type="PRO" id="PR:P39717"/>
<dbReference type="Proteomes" id="UP000002311">
    <property type="component" value="Chromosome I"/>
</dbReference>
<dbReference type="RNAct" id="P39717">
    <property type="molecule type" value="protein"/>
</dbReference>
<dbReference type="GO" id="GO:0005737">
    <property type="term" value="C:cytoplasm"/>
    <property type="evidence" value="ECO:0007005"/>
    <property type="project" value="SGD"/>
</dbReference>
<dbReference type="GO" id="GO:0005739">
    <property type="term" value="C:mitochondrion"/>
    <property type="evidence" value="ECO:0007005"/>
    <property type="project" value="SGD"/>
</dbReference>
<dbReference type="GO" id="GO:0005886">
    <property type="term" value="C:plasma membrane"/>
    <property type="evidence" value="ECO:0000314"/>
    <property type="project" value="SGD"/>
</dbReference>
<dbReference type="GO" id="GO:0004862">
    <property type="term" value="F:cAMP-dependent protein kinase inhibitor activity"/>
    <property type="evidence" value="ECO:0000316"/>
    <property type="project" value="SGD"/>
</dbReference>
<dbReference type="GO" id="GO:0032794">
    <property type="term" value="F:GTPase activating protein binding"/>
    <property type="evidence" value="ECO:0000353"/>
    <property type="project" value="SGD"/>
</dbReference>
<dbReference type="GO" id="GO:0030437">
    <property type="term" value="P:ascospore formation"/>
    <property type="evidence" value="ECO:0007001"/>
    <property type="project" value="SGD"/>
</dbReference>
<dbReference type="GO" id="GO:0010255">
    <property type="term" value="P:glucose mediated signaling pathway"/>
    <property type="evidence" value="ECO:0000315"/>
    <property type="project" value="SGD"/>
</dbReference>
<dbReference type="GO" id="GO:0001403">
    <property type="term" value="P:invasive growth in response to glucose limitation"/>
    <property type="evidence" value="ECO:0000315"/>
    <property type="project" value="SGD"/>
</dbReference>
<dbReference type="GO" id="GO:0046580">
    <property type="term" value="P:negative regulation of Ras protein signal transduction"/>
    <property type="evidence" value="ECO:0000316"/>
    <property type="project" value="SGD"/>
</dbReference>
<dbReference type="GO" id="GO:0007124">
    <property type="term" value="P:pseudohyphal growth"/>
    <property type="evidence" value="ECO:0000315"/>
    <property type="project" value="SGD"/>
</dbReference>
<dbReference type="Gene3D" id="2.120.10.80">
    <property type="entry name" value="Kelch-type beta propeller"/>
    <property type="match status" value="1"/>
</dbReference>
<dbReference type="InterPro" id="IPR011043">
    <property type="entry name" value="Gal_Oxase/kelch_b-propeller"/>
</dbReference>
<dbReference type="InterPro" id="IPR015915">
    <property type="entry name" value="Kelch-typ_b-propeller"/>
</dbReference>
<dbReference type="PANTHER" id="PTHR23244:SF471">
    <property type="entry name" value="GUANINE NUCLEOTIDE-BINDING PROTEIN SUBUNIT BETA 1-RELATED"/>
    <property type="match status" value="1"/>
</dbReference>
<dbReference type="PANTHER" id="PTHR23244">
    <property type="entry name" value="KELCH REPEAT DOMAIN"/>
    <property type="match status" value="1"/>
</dbReference>
<dbReference type="SUPFAM" id="SSF50965">
    <property type="entry name" value="Galactose oxidase, central domain"/>
    <property type="match status" value="2"/>
</dbReference>
<accession>P39717</accession>
<accession>D6VPG2</accession>
<accession>P39716</accession>
<comment type="function">
    <text evidence="2 3 5">Beta subunit of a guanine nucleotide-binding protein (G protein). G proteins are involved as modulators or transducers in various transmembrane signaling systems. The beta and gamma chains are required for the GTPase activity, for replacement of GDP by GTP, and for G protein-effector interaction. Involved in the determination of the cAMP level according to nutritional conditions, most probably as a regulator of cAMP phosphodiesterase. Required for the control of pseudohyphal and haploid invasive growth.</text>
</comment>
<comment type="subunit">
    <text evidence="2">G proteins are composed of 3 units, alpha, beta and gamma. GPB1 interacts with the alpha subunit GPA2.</text>
</comment>
<comment type="interaction">
    <interactant intactId="EBI-20711">
        <id>P39717</id>
    </interactant>
    <interactant intactId="EBI-7382">
        <id>P10823</id>
        <label>GPA2</label>
    </interactant>
    <organismsDiffer>false</organismsDiffer>
    <experiments>4</experiments>
</comment>
<comment type="interaction">
    <interactant intactId="EBI-20711">
        <id>P39717</id>
    </interactant>
    <interactant intactId="EBI-9458">
        <id>P06244</id>
        <label>TPK1</label>
    </interactant>
    <organismsDiffer>false</organismsDiffer>
    <experiments>3</experiments>
</comment>
<comment type="interaction">
    <interactant intactId="EBI-20711">
        <id>P39717</id>
    </interactant>
    <interactant intactId="EBI-400564">
        <id>P05132</id>
        <label>Prkaca</label>
    </interactant>
    <organismsDiffer>true</organismsDiffer>
    <experiments>2</experiments>
</comment>
<comment type="subcellular location">
    <subcellularLocation>
        <location evidence="4">Cytoplasm</location>
    </subcellularLocation>
    <subcellularLocation>
        <location evidence="4">Mitochondrion</location>
    </subcellularLocation>
</comment>